<organism>
    <name type="scientific">Brucella abortus biovar 1 (strain 9-941)</name>
    <dbReference type="NCBI Taxonomy" id="262698"/>
    <lineage>
        <taxon>Bacteria</taxon>
        <taxon>Pseudomonadati</taxon>
        <taxon>Pseudomonadota</taxon>
        <taxon>Alphaproteobacteria</taxon>
        <taxon>Hyphomicrobiales</taxon>
        <taxon>Brucellaceae</taxon>
        <taxon>Brucella/Ochrobactrum group</taxon>
        <taxon>Brucella</taxon>
    </lineage>
</organism>
<proteinExistence type="inferred from homology"/>
<protein>
    <recommendedName>
        <fullName evidence="1">2-oxoglutarate dehydrogenase E1 component</fullName>
        <ecNumber evidence="1">1.2.4.2</ecNumber>
    </recommendedName>
    <alternativeName>
        <fullName evidence="1">Alpha-ketoglutarate dehydrogenase</fullName>
    </alternativeName>
</protein>
<name>ODO1_BRUAB</name>
<reference key="1">
    <citation type="journal article" date="2005" name="J. Bacteriol.">
        <title>Completion of the genome sequence of Brucella abortus and comparison to the highly similar genomes of Brucella melitensis and Brucella suis.</title>
        <authorList>
            <person name="Halling S.M."/>
            <person name="Peterson-Burch B.D."/>
            <person name="Bricker B.J."/>
            <person name="Zuerner R.L."/>
            <person name="Qing Z."/>
            <person name="Li L.-L."/>
            <person name="Kapur V."/>
            <person name="Alt D.P."/>
            <person name="Olsen S.C."/>
        </authorList>
    </citation>
    <scope>NUCLEOTIDE SEQUENCE [LARGE SCALE GENOMIC DNA]</scope>
    <source>
        <strain>9-941</strain>
    </source>
</reference>
<gene>
    <name evidence="1" type="primary">sucA</name>
    <name evidence="1" type="synonym">odhA</name>
    <name type="ordered locus">BruAb1_1899</name>
</gene>
<evidence type="ECO:0000255" key="1">
    <source>
        <dbReference type="HAMAP-Rule" id="MF_01169"/>
    </source>
</evidence>
<comment type="function">
    <text evidence="1">E1 component of the 2-oxoglutarate dehydrogenase (OGDH) complex which catalyzes the decarboxylation of 2-oxoglutarate, the first step in the conversion of 2-oxoglutarate to succinyl-CoA and CO(2).</text>
</comment>
<comment type="catalytic activity">
    <reaction evidence="1">
        <text>N(6)-[(R)-lipoyl]-L-lysyl-[protein] + 2-oxoglutarate + H(+) = N(6)-[(R)-S(8)-succinyldihydrolipoyl]-L-lysyl-[protein] + CO2</text>
        <dbReference type="Rhea" id="RHEA:12188"/>
        <dbReference type="Rhea" id="RHEA-COMP:10474"/>
        <dbReference type="Rhea" id="RHEA-COMP:20092"/>
        <dbReference type="ChEBI" id="CHEBI:15378"/>
        <dbReference type="ChEBI" id="CHEBI:16526"/>
        <dbReference type="ChEBI" id="CHEBI:16810"/>
        <dbReference type="ChEBI" id="CHEBI:83099"/>
        <dbReference type="ChEBI" id="CHEBI:83120"/>
        <dbReference type="EC" id="1.2.4.2"/>
    </reaction>
</comment>
<comment type="cofactor">
    <cofactor evidence="1">
        <name>thiamine diphosphate</name>
        <dbReference type="ChEBI" id="CHEBI:58937"/>
    </cofactor>
</comment>
<comment type="subunit">
    <text evidence="1">Homodimer. Part of the 2-oxoglutarate dehydrogenase (OGDH) complex composed of E1 (2-oxoglutarate dehydrogenase), E2 (dihydrolipoamide succinyltransferase) and E3 (dihydrolipoamide dehydrogenase); the complex contains multiple copies of the three enzymatic components (E1, E2 and E3).</text>
</comment>
<comment type="similarity">
    <text evidence="1">Belongs to the alpha-ketoglutarate dehydrogenase family.</text>
</comment>
<dbReference type="EC" id="1.2.4.2" evidence="1"/>
<dbReference type="EMBL" id="AE017223">
    <property type="protein sequence ID" value="AAX75209.1"/>
    <property type="molecule type" value="Genomic_DNA"/>
</dbReference>
<dbReference type="RefSeq" id="WP_002968648.1">
    <property type="nucleotide sequence ID" value="NC_006932.1"/>
</dbReference>
<dbReference type="SMR" id="Q57AX5"/>
<dbReference type="EnsemblBacteria" id="AAX75209">
    <property type="protein sequence ID" value="AAX75209"/>
    <property type="gene ID" value="BruAb1_1899"/>
</dbReference>
<dbReference type="KEGG" id="bmb:BruAb1_1899"/>
<dbReference type="HOGENOM" id="CLU_004709_1_0_5"/>
<dbReference type="Proteomes" id="UP000000540">
    <property type="component" value="Chromosome I"/>
</dbReference>
<dbReference type="GO" id="GO:0005829">
    <property type="term" value="C:cytosol"/>
    <property type="evidence" value="ECO:0007669"/>
    <property type="project" value="TreeGrafter"/>
</dbReference>
<dbReference type="GO" id="GO:0045252">
    <property type="term" value="C:oxoglutarate dehydrogenase complex"/>
    <property type="evidence" value="ECO:0007669"/>
    <property type="project" value="TreeGrafter"/>
</dbReference>
<dbReference type="GO" id="GO:0004591">
    <property type="term" value="F:oxoglutarate dehydrogenase (succinyl-transferring) activity"/>
    <property type="evidence" value="ECO:0007669"/>
    <property type="project" value="UniProtKB-UniRule"/>
</dbReference>
<dbReference type="GO" id="GO:0030976">
    <property type="term" value="F:thiamine pyrophosphate binding"/>
    <property type="evidence" value="ECO:0007669"/>
    <property type="project" value="UniProtKB-UniRule"/>
</dbReference>
<dbReference type="GO" id="GO:0006096">
    <property type="term" value="P:glycolytic process"/>
    <property type="evidence" value="ECO:0007669"/>
    <property type="project" value="UniProtKB-UniRule"/>
</dbReference>
<dbReference type="GO" id="GO:0006099">
    <property type="term" value="P:tricarboxylic acid cycle"/>
    <property type="evidence" value="ECO:0007669"/>
    <property type="project" value="TreeGrafter"/>
</dbReference>
<dbReference type="CDD" id="cd02016">
    <property type="entry name" value="TPP_E1_OGDC_like"/>
    <property type="match status" value="1"/>
</dbReference>
<dbReference type="FunFam" id="3.40.50.12470:FF:000003">
    <property type="entry name" value="2-oxoglutarate dehydrogenase E1 component"/>
    <property type="match status" value="1"/>
</dbReference>
<dbReference type="Gene3D" id="3.40.50.12470">
    <property type="match status" value="1"/>
</dbReference>
<dbReference type="Gene3D" id="3.40.50.970">
    <property type="match status" value="1"/>
</dbReference>
<dbReference type="Gene3D" id="3.40.50.11610">
    <property type="entry name" value="Multifunctional 2-oxoglutarate metabolism enzyme, C-terminal domain"/>
    <property type="match status" value="1"/>
</dbReference>
<dbReference type="Gene3D" id="1.10.287.1150">
    <property type="entry name" value="TPP helical domain"/>
    <property type="match status" value="1"/>
</dbReference>
<dbReference type="HAMAP" id="MF_01169">
    <property type="entry name" value="SucA_OdhA"/>
    <property type="match status" value="1"/>
</dbReference>
<dbReference type="InterPro" id="IPR032106">
    <property type="entry name" value="2-oxogl_dehyd_N"/>
</dbReference>
<dbReference type="InterPro" id="IPR011603">
    <property type="entry name" value="2oxoglutarate_DH_E1"/>
</dbReference>
<dbReference type="InterPro" id="IPR023784">
    <property type="entry name" value="2oxoglutarate_DH_E1_bac"/>
</dbReference>
<dbReference type="InterPro" id="IPR001017">
    <property type="entry name" value="DH_E1"/>
</dbReference>
<dbReference type="InterPro" id="IPR042179">
    <property type="entry name" value="KGD_C_sf"/>
</dbReference>
<dbReference type="InterPro" id="IPR031717">
    <property type="entry name" value="ODO-1/KGD_C"/>
</dbReference>
<dbReference type="InterPro" id="IPR029061">
    <property type="entry name" value="THDP-binding"/>
</dbReference>
<dbReference type="InterPro" id="IPR005475">
    <property type="entry name" value="Transketolase-like_Pyr-bd"/>
</dbReference>
<dbReference type="NCBIfam" id="TIGR00239">
    <property type="entry name" value="2oxo_dh_E1"/>
    <property type="match status" value="1"/>
</dbReference>
<dbReference type="NCBIfam" id="NF006914">
    <property type="entry name" value="PRK09404.1"/>
    <property type="match status" value="1"/>
</dbReference>
<dbReference type="NCBIfam" id="NF008907">
    <property type="entry name" value="PRK12270.1"/>
    <property type="match status" value="1"/>
</dbReference>
<dbReference type="PANTHER" id="PTHR23152:SF4">
    <property type="entry name" value="2-OXOADIPATE DEHYDROGENASE COMPLEX COMPONENT E1"/>
    <property type="match status" value="1"/>
</dbReference>
<dbReference type="PANTHER" id="PTHR23152">
    <property type="entry name" value="2-OXOGLUTARATE DEHYDROGENASE"/>
    <property type="match status" value="1"/>
</dbReference>
<dbReference type="Pfam" id="PF16078">
    <property type="entry name" value="2-oxogl_dehyd_N"/>
    <property type="match status" value="1"/>
</dbReference>
<dbReference type="Pfam" id="PF00676">
    <property type="entry name" value="E1_dh"/>
    <property type="match status" value="1"/>
</dbReference>
<dbReference type="Pfam" id="PF16870">
    <property type="entry name" value="OxoGdeHyase_C"/>
    <property type="match status" value="1"/>
</dbReference>
<dbReference type="Pfam" id="PF02779">
    <property type="entry name" value="Transket_pyr"/>
    <property type="match status" value="1"/>
</dbReference>
<dbReference type="PIRSF" id="PIRSF000157">
    <property type="entry name" value="Oxoglu_dh_E1"/>
    <property type="match status" value="1"/>
</dbReference>
<dbReference type="SMART" id="SM00861">
    <property type="entry name" value="Transket_pyr"/>
    <property type="match status" value="1"/>
</dbReference>
<dbReference type="SUPFAM" id="SSF52518">
    <property type="entry name" value="Thiamin diphosphate-binding fold (THDP-binding)"/>
    <property type="match status" value="2"/>
</dbReference>
<accession>Q57AX5</accession>
<keyword id="KW-0324">Glycolysis</keyword>
<keyword id="KW-0560">Oxidoreductase</keyword>
<keyword id="KW-0786">Thiamine pyrophosphate</keyword>
<feature type="chain" id="PRO_1000065699" description="2-oxoglutarate dehydrogenase E1 component">
    <location>
        <begin position="1"/>
        <end position="1004"/>
    </location>
</feature>
<sequence length="1004" mass="112708">MAKQEQAPDRANDVFALTSFLYGGNADYIEELYAKYEDDPNSVDPQWRDFFAKLGDNADDVKKNAEGPSWTRKNWPIAANGELVSALDGNWAEVEKHVTDKLKGKAAKGEAKGAAGTPLTAEEITQAARDSVRAIMMIRAYRMRGHLHANLDPLGLAEKPNDYNELEPENYGFTPADYNRKIFIDNVLGLEYATVPEMLDILKRTYCGAIGVEFMHISDPAEKAWIQERIEGPDKKVAFTPEGKKAILSKLIEAEGFEQFIDVKYKGTKRFGLDGGESLIPALEQIVKRGGQMGLKEVVLGMAHRGRLNVLSQVMGKPHRAIFHEFKGGSYTPDDVEGSGDVKYHLGASSDREFDGNKVHLSLTANPSHLEIVNPVVMGKARAKQDLLVGRTRDDMVPLSERAKVLPLLLHGDAAFAGQGVVAECLGLSGLKGHRVAGTLHFIINNQIGFTTNPAFSRSSPYPSDVAKMIEAPIFHVNGDDPEAVVFAAKVATEFRMTFHKPVVIDMFCYRRFGHNEGDEPSFTQPLMYKAIRAHKTTVQLYGEKLIAEGLVTQDDIDRMKADWRQKLEGEFEAGQSYKPNKADWLDGAWAGLRTADNADEQRRGKTAVPVKTLKEIGKKLVEVPKDFHVHRTIQRFLDNRAKMMETGEGIDWATAESLAFGSLAVEGHPIRLSGQDVERGTFSQRHTVLYDQENQNRYIPLNNLQKGQAIYEAINSMLSEEAVLGYEYGYSLSDPRALVLWEAQFGDFANGAQVVFDQFISSGERKWLRMSGLVCLLPHGFEGQGPEHSSARLERYLQLCAEDNMQVANVTTPANYFHILRRQMKRDFRKPLIMMTPKSLLRHKRAISTLAELSGESSFHRLLWDDARYNKDKGIKLQKDAKIRRVVLCSGKVYYDLYEEREKRGIDDVYLLRVEQLYPFPAKALINELSRFRHAEMVWCQEEPKNMGAWSFIDPYLEWVLAHIDAKHQRVRYAGRPAAASPATGLMSKHLAQLAAFLEDALG</sequence>